<accession>B0SXR3</accession>
<comment type="function">
    <text evidence="1">Together with the chaperonin GroEL, plays an essential role in assisting protein folding. The GroEL-GroES system forms a nano-cage that allows encapsulation of the non-native substrate proteins and provides a physical environment optimized to promote and accelerate protein folding. GroES binds to the apical surface of the GroEL ring, thereby capping the opening of the GroEL channel.</text>
</comment>
<comment type="subunit">
    <text evidence="1">Heptamer of 7 subunits arranged in a ring. Interacts with the chaperonin GroEL.</text>
</comment>
<comment type="subcellular location">
    <subcellularLocation>
        <location evidence="1">Cytoplasm</location>
    </subcellularLocation>
</comment>
<comment type="similarity">
    <text evidence="1">Belongs to the GroES chaperonin family.</text>
</comment>
<proteinExistence type="inferred from homology"/>
<feature type="chain" id="PRO_1000082368" description="Co-chaperonin GroES">
    <location>
        <begin position="1"/>
        <end position="96"/>
    </location>
</feature>
<dbReference type="EMBL" id="CP000927">
    <property type="protein sequence ID" value="ABZ73275.1"/>
    <property type="molecule type" value="Genomic_DNA"/>
</dbReference>
<dbReference type="SMR" id="B0SXR3"/>
<dbReference type="STRING" id="366602.Caul_4151"/>
<dbReference type="KEGG" id="cak:Caul_4151"/>
<dbReference type="eggNOG" id="COG0234">
    <property type="taxonomic scope" value="Bacteria"/>
</dbReference>
<dbReference type="HOGENOM" id="CLU_132825_1_0_5"/>
<dbReference type="OrthoDB" id="9806791at2"/>
<dbReference type="GO" id="GO:0005737">
    <property type="term" value="C:cytoplasm"/>
    <property type="evidence" value="ECO:0007669"/>
    <property type="project" value="UniProtKB-SubCell"/>
</dbReference>
<dbReference type="GO" id="GO:0005524">
    <property type="term" value="F:ATP binding"/>
    <property type="evidence" value="ECO:0007669"/>
    <property type="project" value="InterPro"/>
</dbReference>
<dbReference type="GO" id="GO:0046872">
    <property type="term" value="F:metal ion binding"/>
    <property type="evidence" value="ECO:0007669"/>
    <property type="project" value="TreeGrafter"/>
</dbReference>
<dbReference type="GO" id="GO:0044183">
    <property type="term" value="F:protein folding chaperone"/>
    <property type="evidence" value="ECO:0007669"/>
    <property type="project" value="InterPro"/>
</dbReference>
<dbReference type="GO" id="GO:0051087">
    <property type="term" value="F:protein-folding chaperone binding"/>
    <property type="evidence" value="ECO:0007669"/>
    <property type="project" value="TreeGrafter"/>
</dbReference>
<dbReference type="GO" id="GO:0051082">
    <property type="term" value="F:unfolded protein binding"/>
    <property type="evidence" value="ECO:0007669"/>
    <property type="project" value="TreeGrafter"/>
</dbReference>
<dbReference type="GO" id="GO:0051085">
    <property type="term" value="P:chaperone cofactor-dependent protein refolding"/>
    <property type="evidence" value="ECO:0007669"/>
    <property type="project" value="TreeGrafter"/>
</dbReference>
<dbReference type="CDD" id="cd00320">
    <property type="entry name" value="cpn10"/>
    <property type="match status" value="1"/>
</dbReference>
<dbReference type="FunFam" id="2.30.33.40:FF:000001">
    <property type="entry name" value="10 kDa chaperonin"/>
    <property type="match status" value="1"/>
</dbReference>
<dbReference type="Gene3D" id="2.30.33.40">
    <property type="entry name" value="GroES chaperonin"/>
    <property type="match status" value="1"/>
</dbReference>
<dbReference type="HAMAP" id="MF_00580">
    <property type="entry name" value="CH10"/>
    <property type="match status" value="1"/>
</dbReference>
<dbReference type="InterPro" id="IPR020818">
    <property type="entry name" value="Chaperonin_GroES"/>
</dbReference>
<dbReference type="InterPro" id="IPR037124">
    <property type="entry name" value="Chaperonin_GroES_sf"/>
</dbReference>
<dbReference type="InterPro" id="IPR018369">
    <property type="entry name" value="Chaprnonin_Cpn10_CS"/>
</dbReference>
<dbReference type="InterPro" id="IPR011032">
    <property type="entry name" value="GroES-like_sf"/>
</dbReference>
<dbReference type="NCBIfam" id="NF001527">
    <property type="entry name" value="PRK00364.1-2"/>
    <property type="match status" value="1"/>
</dbReference>
<dbReference type="NCBIfam" id="NF001529">
    <property type="entry name" value="PRK00364.1-5"/>
    <property type="match status" value="1"/>
</dbReference>
<dbReference type="NCBIfam" id="NF001531">
    <property type="entry name" value="PRK00364.2-2"/>
    <property type="match status" value="1"/>
</dbReference>
<dbReference type="NCBIfam" id="NF001533">
    <property type="entry name" value="PRK00364.2-4"/>
    <property type="match status" value="1"/>
</dbReference>
<dbReference type="NCBIfam" id="NF001534">
    <property type="entry name" value="PRK00364.2-5"/>
    <property type="match status" value="1"/>
</dbReference>
<dbReference type="NCBIfam" id="NF001537">
    <property type="entry name" value="PRK00364.3-3"/>
    <property type="match status" value="1"/>
</dbReference>
<dbReference type="PANTHER" id="PTHR10772">
    <property type="entry name" value="10 KDA HEAT SHOCK PROTEIN"/>
    <property type="match status" value="1"/>
</dbReference>
<dbReference type="PANTHER" id="PTHR10772:SF58">
    <property type="entry name" value="CO-CHAPERONIN GROES"/>
    <property type="match status" value="1"/>
</dbReference>
<dbReference type="Pfam" id="PF00166">
    <property type="entry name" value="Cpn10"/>
    <property type="match status" value="1"/>
</dbReference>
<dbReference type="PRINTS" id="PR00297">
    <property type="entry name" value="CHAPERONIN10"/>
</dbReference>
<dbReference type="SMART" id="SM00883">
    <property type="entry name" value="Cpn10"/>
    <property type="match status" value="1"/>
</dbReference>
<dbReference type="SUPFAM" id="SSF50129">
    <property type="entry name" value="GroES-like"/>
    <property type="match status" value="1"/>
</dbReference>
<dbReference type="PROSITE" id="PS00681">
    <property type="entry name" value="CHAPERONINS_CPN10"/>
    <property type="match status" value="1"/>
</dbReference>
<sequence length="96" mass="10400">MKFRPLGDRVLVKRVEEETKTKGGIIIPDTVKEKPQEGEVVAVGPGARNDKGDIVALDVKAGDRILFGKWSGTEVKVDGQDLLIMKESDVLGIVEA</sequence>
<reference key="1">
    <citation type="submission" date="2008-01" db="EMBL/GenBank/DDBJ databases">
        <title>Complete sequence of chromosome of Caulobacter sp. K31.</title>
        <authorList>
            <consortium name="US DOE Joint Genome Institute"/>
            <person name="Copeland A."/>
            <person name="Lucas S."/>
            <person name="Lapidus A."/>
            <person name="Barry K."/>
            <person name="Glavina del Rio T."/>
            <person name="Dalin E."/>
            <person name="Tice H."/>
            <person name="Pitluck S."/>
            <person name="Bruce D."/>
            <person name="Goodwin L."/>
            <person name="Thompson L.S."/>
            <person name="Brettin T."/>
            <person name="Detter J.C."/>
            <person name="Han C."/>
            <person name="Schmutz J."/>
            <person name="Larimer F."/>
            <person name="Land M."/>
            <person name="Hauser L."/>
            <person name="Kyrpides N."/>
            <person name="Kim E."/>
            <person name="Stephens C."/>
            <person name="Richardson P."/>
        </authorList>
    </citation>
    <scope>NUCLEOTIDE SEQUENCE [LARGE SCALE GENOMIC DNA]</scope>
    <source>
        <strain>K31</strain>
    </source>
</reference>
<organism>
    <name type="scientific">Caulobacter sp. (strain K31)</name>
    <dbReference type="NCBI Taxonomy" id="366602"/>
    <lineage>
        <taxon>Bacteria</taxon>
        <taxon>Pseudomonadati</taxon>
        <taxon>Pseudomonadota</taxon>
        <taxon>Alphaproteobacteria</taxon>
        <taxon>Caulobacterales</taxon>
        <taxon>Caulobacteraceae</taxon>
        <taxon>Caulobacter</taxon>
    </lineage>
</organism>
<gene>
    <name evidence="1" type="primary">groES</name>
    <name evidence="1" type="synonym">groS</name>
    <name type="ordered locus">Caul_4151</name>
</gene>
<evidence type="ECO:0000255" key="1">
    <source>
        <dbReference type="HAMAP-Rule" id="MF_00580"/>
    </source>
</evidence>
<keyword id="KW-0143">Chaperone</keyword>
<keyword id="KW-0963">Cytoplasm</keyword>
<name>CH10_CAUSK</name>
<protein>
    <recommendedName>
        <fullName evidence="1">Co-chaperonin GroES</fullName>
    </recommendedName>
    <alternativeName>
        <fullName evidence="1">10 kDa chaperonin</fullName>
    </alternativeName>
    <alternativeName>
        <fullName evidence="1">Chaperonin-10</fullName>
        <shortName evidence="1">Cpn10</shortName>
    </alternativeName>
</protein>